<evidence type="ECO:0000255" key="1">
    <source>
        <dbReference type="HAMAP-Rule" id="MF_00123"/>
    </source>
</evidence>
<comment type="catalytic activity">
    <reaction evidence="1">
        <text>tRNA(Arg) + L-arginine + ATP = L-arginyl-tRNA(Arg) + AMP + diphosphate</text>
        <dbReference type="Rhea" id="RHEA:20301"/>
        <dbReference type="Rhea" id="RHEA-COMP:9658"/>
        <dbReference type="Rhea" id="RHEA-COMP:9673"/>
        <dbReference type="ChEBI" id="CHEBI:30616"/>
        <dbReference type="ChEBI" id="CHEBI:32682"/>
        <dbReference type="ChEBI" id="CHEBI:33019"/>
        <dbReference type="ChEBI" id="CHEBI:78442"/>
        <dbReference type="ChEBI" id="CHEBI:78513"/>
        <dbReference type="ChEBI" id="CHEBI:456215"/>
        <dbReference type="EC" id="6.1.1.19"/>
    </reaction>
</comment>
<comment type="subunit">
    <text evidence="1">Monomer.</text>
</comment>
<comment type="subcellular location">
    <subcellularLocation>
        <location evidence="1">Cytoplasm</location>
    </subcellularLocation>
</comment>
<comment type="similarity">
    <text evidence="1">Belongs to the class-I aminoacyl-tRNA synthetase family.</text>
</comment>
<sequence>MNIENYLSETLAKVFQKLGYAESFAKVVTSTREDVRHFQCNGAMPLAKFAKKPPLAIAEEIVEHIDAEDIFAKLEVAKPGFINITLAPKFLADTTNRFLNSNKFGVQNNLPNRKVVLDFGGPNVAKPMHVGHIRSALLGDALQRIHRFCGDTVVSDVHLGDWGTQMGMLIEEIKLQSPQLVYFDENYTGEYPTESPVTVQELAEIYPRASKRCKSDINEMEKARLATFELQQGRRGYVALWQHFVRISIDAVKKDFDSLDVHFDLWLGESDANKFIDEMISYFQANNFIYEDEGAWVIDTNKDGVPPLIVIKKDGGVMYGTTDLATLWQRSKDLDPDEIIYVVDKRQSLHFKQVFSVAERTKVVSEKCKLKHVAFGTVNGKDGRPFKTREGGVMHLADLISQAKEYAKNRMPDENDDSIINQIAMATIKFGDLINNYANDYFFDLEKFAQHEGKTGPYLLYTVVRAKSILRKIFGDNYDIKSLAKDYKVVNAHNEYEEKLQLQLIQFPIAVQRAYENSQPHHICEYAYSLANSFNKFYVNCPINNLDDESLKKARIALCMATVKAMTIASDLIGISIPERM</sequence>
<reference key="1">
    <citation type="journal article" date="2007" name="PLoS ONE">
        <title>Genome sequencing shows that European isolates of Francisella tularensis subspecies tularensis are almost identical to US laboratory strain Schu S4.</title>
        <authorList>
            <person name="Chaudhuri R.R."/>
            <person name="Ren C.-P."/>
            <person name="Desmond L."/>
            <person name="Vincent G.A."/>
            <person name="Silman N.J."/>
            <person name="Brehm J.K."/>
            <person name="Elmore M.J."/>
            <person name="Hudson M.J."/>
            <person name="Forsman M."/>
            <person name="Isherwood K.E."/>
            <person name="Gurycova D."/>
            <person name="Minton N.P."/>
            <person name="Titball R.W."/>
            <person name="Pallen M.J."/>
            <person name="Vipond R."/>
        </authorList>
    </citation>
    <scope>NUCLEOTIDE SEQUENCE [LARGE SCALE GENOMIC DNA]</scope>
    <source>
        <strain>FSC 198</strain>
    </source>
</reference>
<accession>Q14IZ0</accession>
<protein>
    <recommendedName>
        <fullName evidence="1">Arginine--tRNA ligase</fullName>
        <ecNumber evidence="1">6.1.1.19</ecNumber>
    </recommendedName>
    <alternativeName>
        <fullName evidence="1">Arginyl-tRNA synthetase</fullName>
        <shortName evidence="1">ArgRS</shortName>
    </alternativeName>
</protein>
<dbReference type="EC" id="6.1.1.19" evidence="1"/>
<dbReference type="EMBL" id="AM286280">
    <property type="protein sequence ID" value="CAL08482.1"/>
    <property type="molecule type" value="Genomic_DNA"/>
</dbReference>
<dbReference type="RefSeq" id="WP_003020254.1">
    <property type="nucleotide sequence ID" value="NC_008245.1"/>
</dbReference>
<dbReference type="SMR" id="Q14IZ0"/>
<dbReference type="KEGG" id="ftf:FTF0466c"/>
<dbReference type="HOGENOM" id="CLU_006406_5_1_6"/>
<dbReference type="GO" id="GO:0005737">
    <property type="term" value="C:cytoplasm"/>
    <property type="evidence" value="ECO:0007669"/>
    <property type="project" value="UniProtKB-SubCell"/>
</dbReference>
<dbReference type="GO" id="GO:0004814">
    <property type="term" value="F:arginine-tRNA ligase activity"/>
    <property type="evidence" value="ECO:0007669"/>
    <property type="project" value="UniProtKB-UniRule"/>
</dbReference>
<dbReference type="GO" id="GO:0005524">
    <property type="term" value="F:ATP binding"/>
    <property type="evidence" value="ECO:0007669"/>
    <property type="project" value="UniProtKB-UniRule"/>
</dbReference>
<dbReference type="GO" id="GO:0006420">
    <property type="term" value="P:arginyl-tRNA aminoacylation"/>
    <property type="evidence" value="ECO:0007669"/>
    <property type="project" value="UniProtKB-UniRule"/>
</dbReference>
<dbReference type="CDD" id="cd00671">
    <property type="entry name" value="ArgRS_core"/>
    <property type="match status" value="1"/>
</dbReference>
<dbReference type="Gene3D" id="3.30.1360.70">
    <property type="entry name" value="Arginyl tRNA synthetase N-terminal domain"/>
    <property type="match status" value="1"/>
</dbReference>
<dbReference type="Gene3D" id="3.40.50.620">
    <property type="entry name" value="HUPs"/>
    <property type="match status" value="1"/>
</dbReference>
<dbReference type="Gene3D" id="1.10.730.10">
    <property type="entry name" value="Isoleucyl-tRNA Synthetase, Domain 1"/>
    <property type="match status" value="1"/>
</dbReference>
<dbReference type="HAMAP" id="MF_00123">
    <property type="entry name" value="Arg_tRNA_synth"/>
    <property type="match status" value="1"/>
</dbReference>
<dbReference type="InterPro" id="IPR001412">
    <property type="entry name" value="aa-tRNA-synth_I_CS"/>
</dbReference>
<dbReference type="InterPro" id="IPR001278">
    <property type="entry name" value="Arg-tRNA-ligase"/>
</dbReference>
<dbReference type="InterPro" id="IPR005148">
    <property type="entry name" value="Arg-tRNA-synth_N"/>
</dbReference>
<dbReference type="InterPro" id="IPR036695">
    <property type="entry name" value="Arg-tRNA-synth_N_sf"/>
</dbReference>
<dbReference type="InterPro" id="IPR035684">
    <property type="entry name" value="ArgRS_core"/>
</dbReference>
<dbReference type="InterPro" id="IPR008909">
    <property type="entry name" value="DALR_anticod-bd"/>
</dbReference>
<dbReference type="InterPro" id="IPR014729">
    <property type="entry name" value="Rossmann-like_a/b/a_fold"/>
</dbReference>
<dbReference type="InterPro" id="IPR009080">
    <property type="entry name" value="tRNAsynth_Ia_anticodon-bd"/>
</dbReference>
<dbReference type="NCBIfam" id="TIGR00456">
    <property type="entry name" value="argS"/>
    <property type="match status" value="1"/>
</dbReference>
<dbReference type="PANTHER" id="PTHR11956:SF5">
    <property type="entry name" value="ARGININE--TRNA LIGASE, CYTOPLASMIC"/>
    <property type="match status" value="1"/>
</dbReference>
<dbReference type="PANTHER" id="PTHR11956">
    <property type="entry name" value="ARGINYL-TRNA SYNTHETASE"/>
    <property type="match status" value="1"/>
</dbReference>
<dbReference type="Pfam" id="PF03485">
    <property type="entry name" value="Arg_tRNA_synt_N"/>
    <property type="match status" value="1"/>
</dbReference>
<dbReference type="Pfam" id="PF05746">
    <property type="entry name" value="DALR_1"/>
    <property type="match status" value="1"/>
</dbReference>
<dbReference type="Pfam" id="PF00750">
    <property type="entry name" value="tRNA-synt_1d"/>
    <property type="match status" value="1"/>
</dbReference>
<dbReference type="PRINTS" id="PR01038">
    <property type="entry name" value="TRNASYNTHARG"/>
</dbReference>
<dbReference type="SMART" id="SM01016">
    <property type="entry name" value="Arg_tRNA_synt_N"/>
    <property type="match status" value="1"/>
</dbReference>
<dbReference type="SMART" id="SM00836">
    <property type="entry name" value="DALR_1"/>
    <property type="match status" value="1"/>
</dbReference>
<dbReference type="SUPFAM" id="SSF47323">
    <property type="entry name" value="Anticodon-binding domain of a subclass of class I aminoacyl-tRNA synthetases"/>
    <property type="match status" value="1"/>
</dbReference>
<dbReference type="SUPFAM" id="SSF55190">
    <property type="entry name" value="Arginyl-tRNA synthetase (ArgRS), N-terminal 'additional' domain"/>
    <property type="match status" value="1"/>
</dbReference>
<dbReference type="SUPFAM" id="SSF52374">
    <property type="entry name" value="Nucleotidylyl transferase"/>
    <property type="match status" value="1"/>
</dbReference>
<dbReference type="PROSITE" id="PS00178">
    <property type="entry name" value="AA_TRNA_LIGASE_I"/>
    <property type="match status" value="1"/>
</dbReference>
<gene>
    <name evidence="1" type="primary">argS</name>
    <name type="ordered locus">FTF0466c</name>
</gene>
<feature type="chain" id="PRO_1000018029" description="Arginine--tRNA ligase">
    <location>
        <begin position="1"/>
        <end position="581"/>
    </location>
</feature>
<feature type="short sequence motif" description="'HIGH' region">
    <location>
        <begin position="122"/>
        <end position="132"/>
    </location>
</feature>
<organism>
    <name type="scientific">Francisella tularensis subsp. tularensis (strain FSC 198)</name>
    <dbReference type="NCBI Taxonomy" id="393115"/>
    <lineage>
        <taxon>Bacteria</taxon>
        <taxon>Pseudomonadati</taxon>
        <taxon>Pseudomonadota</taxon>
        <taxon>Gammaproteobacteria</taxon>
        <taxon>Thiotrichales</taxon>
        <taxon>Francisellaceae</taxon>
        <taxon>Francisella</taxon>
    </lineage>
</organism>
<keyword id="KW-0030">Aminoacyl-tRNA synthetase</keyword>
<keyword id="KW-0067">ATP-binding</keyword>
<keyword id="KW-0963">Cytoplasm</keyword>
<keyword id="KW-0436">Ligase</keyword>
<keyword id="KW-0547">Nucleotide-binding</keyword>
<keyword id="KW-0648">Protein biosynthesis</keyword>
<name>SYR_FRAT1</name>
<proteinExistence type="inferred from homology"/>